<keyword id="KW-0378">Hydrolase</keyword>
<keyword id="KW-0479">Metal-binding</keyword>
<keyword id="KW-0862">Zinc</keyword>
<protein>
    <recommendedName>
        <fullName evidence="1">Hydroxyacylglutathione hydrolase</fullName>
        <ecNumber evidence="1">3.1.2.6</ecNumber>
    </recommendedName>
    <alternativeName>
        <fullName evidence="1">Glyoxalase II</fullName>
        <shortName evidence="1">Glx II</shortName>
    </alternativeName>
</protein>
<proteinExistence type="inferred from homology"/>
<accession>Q0BMS2</accession>
<feature type="chain" id="PRO_0000309642" description="Hydroxyacylglutathione hydrolase">
    <location>
        <begin position="1"/>
        <end position="252"/>
    </location>
</feature>
<feature type="binding site" evidence="1">
    <location>
        <position position="54"/>
    </location>
    <ligand>
        <name>Zn(2+)</name>
        <dbReference type="ChEBI" id="CHEBI:29105"/>
        <label>1</label>
    </ligand>
</feature>
<feature type="binding site" evidence="1">
    <location>
        <position position="56"/>
    </location>
    <ligand>
        <name>Zn(2+)</name>
        <dbReference type="ChEBI" id="CHEBI:29105"/>
        <label>1</label>
    </ligand>
</feature>
<feature type="binding site" evidence="1">
    <location>
        <position position="58"/>
    </location>
    <ligand>
        <name>Zn(2+)</name>
        <dbReference type="ChEBI" id="CHEBI:29105"/>
        <label>2</label>
    </ligand>
</feature>
<feature type="binding site" evidence="1">
    <location>
        <position position="59"/>
    </location>
    <ligand>
        <name>Zn(2+)</name>
        <dbReference type="ChEBI" id="CHEBI:29105"/>
        <label>2</label>
    </ligand>
</feature>
<feature type="binding site" evidence="1">
    <location>
        <position position="111"/>
    </location>
    <ligand>
        <name>Zn(2+)</name>
        <dbReference type="ChEBI" id="CHEBI:29105"/>
        <label>1</label>
    </ligand>
</feature>
<feature type="binding site" evidence="1">
    <location>
        <position position="130"/>
    </location>
    <ligand>
        <name>Zn(2+)</name>
        <dbReference type="ChEBI" id="CHEBI:29105"/>
        <label>1</label>
    </ligand>
</feature>
<feature type="binding site" evidence="1">
    <location>
        <position position="130"/>
    </location>
    <ligand>
        <name>Zn(2+)</name>
        <dbReference type="ChEBI" id="CHEBI:29105"/>
        <label>2</label>
    </ligand>
</feature>
<feature type="binding site" evidence="1">
    <location>
        <position position="170"/>
    </location>
    <ligand>
        <name>Zn(2+)</name>
        <dbReference type="ChEBI" id="CHEBI:29105"/>
        <label>2</label>
    </ligand>
</feature>
<name>GLO2_FRATO</name>
<evidence type="ECO:0000255" key="1">
    <source>
        <dbReference type="HAMAP-Rule" id="MF_01374"/>
    </source>
</evidence>
<organism>
    <name type="scientific">Francisella tularensis subsp. holarctica (strain OSU18)</name>
    <dbReference type="NCBI Taxonomy" id="393011"/>
    <lineage>
        <taxon>Bacteria</taxon>
        <taxon>Pseudomonadati</taxon>
        <taxon>Pseudomonadota</taxon>
        <taxon>Gammaproteobacteria</taxon>
        <taxon>Thiotrichales</taxon>
        <taxon>Francisellaceae</taxon>
        <taxon>Francisella</taxon>
    </lineage>
</organism>
<comment type="function">
    <text evidence="1">Thiolesterase that catalyzes the hydrolysis of S-D-lactoyl-glutathione to form glutathione and D-lactic acid.</text>
</comment>
<comment type="catalytic activity">
    <reaction evidence="1">
        <text>an S-(2-hydroxyacyl)glutathione + H2O = a 2-hydroxy carboxylate + glutathione + H(+)</text>
        <dbReference type="Rhea" id="RHEA:21864"/>
        <dbReference type="ChEBI" id="CHEBI:15377"/>
        <dbReference type="ChEBI" id="CHEBI:15378"/>
        <dbReference type="ChEBI" id="CHEBI:57925"/>
        <dbReference type="ChEBI" id="CHEBI:58896"/>
        <dbReference type="ChEBI" id="CHEBI:71261"/>
        <dbReference type="EC" id="3.1.2.6"/>
    </reaction>
</comment>
<comment type="cofactor">
    <cofactor evidence="1">
        <name>Zn(2+)</name>
        <dbReference type="ChEBI" id="CHEBI:29105"/>
    </cofactor>
    <text evidence="1">Binds 2 Zn(2+) ions per subunit.</text>
</comment>
<comment type="pathway">
    <text evidence="1">Secondary metabolite metabolism; methylglyoxal degradation; (R)-lactate from methylglyoxal: step 2/2.</text>
</comment>
<comment type="subunit">
    <text evidence="1">Monomer.</text>
</comment>
<comment type="similarity">
    <text evidence="1">Belongs to the metallo-beta-lactamase superfamily. Glyoxalase II family.</text>
</comment>
<reference key="1">
    <citation type="journal article" date="2006" name="J. Bacteriol.">
        <title>Chromosome rearrangement and diversification of Francisella tularensis revealed by the type B (OSU18) genome sequence.</title>
        <authorList>
            <person name="Petrosino J.F."/>
            <person name="Xiang Q."/>
            <person name="Karpathy S.E."/>
            <person name="Jiang H."/>
            <person name="Yerrapragada S."/>
            <person name="Liu Y."/>
            <person name="Gioia J."/>
            <person name="Hemphill L."/>
            <person name="Gonzalez A."/>
            <person name="Raghavan T.M."/>
            <person name="Uzman A."/>
            <person name="Fox G.E."/>
            <person name="Highlander S."/>
            <person name="Reichard M."/>
            <person name="Morton R.J."/>
            <person name="Clinkenbeard K.D."/>
            <person name="Weinstock G.M."/>
        </authorList>
    </citation>
    <scope>NUCLEOTIDE SEQUENCE [LARGE SCALE GENOMIC DNA]</scope>
    <source>
        <strain>OSU18</strain>
    </source>
</reference>
<dbReference type="EC" id="3.1.2.6" evidence="1"/>
<dbReference type="EMBL" id="CP000437">
    <property type="protein sequence ID" value="ABI82612.1"/>
    <property type="molecule type" value="Genomic_DNA"/>
</dbReference>
<dbReference type="RefSeq" id="WP_003015071.1">
    <property type="nucleotide sequence ID" value="NC_017463.1"/>
</dbReference>
<dbReference type="SMR" id="Q0BMS2"/>
<dbReference type="KEGG" id="fth:FTH_0660"/>
<dbReference type="UniPathway" id="UPA00619">
    <property type="reaction ID" value="UER00676"/>
</dbReference>
<dbReference type="GO" id="GO:0004416">
    <property type="term" value="F:hydroxyacylglutathione hydrolase activity"/>
    <property type="evidence" value="ECO:0007669"/>
    <property type="project" value="UniProtKB-UniRule"/>
</dbReference>
<dbReference type="GO" id="GO:0046872">
    <property type="term" value="F:metal ion binding"/>
    <property type="evidence" value="ECO:0007669"/>
    <property type="project" value="UniProtKB-KW"/>
</dbReference>
<dbReference type="GO" id="GO:0019243">
    <property type="term" value="P:methylglyoxal catabolic process to D-lactate via S-lactoyl-glutathione"/>
    <property type="evidence" value="ECO:0007669"/>
    <property type="project" value="InterPro"/>
</dbReference>
<dbReference type="CDD" id="cd07723">
    <property type="entry name" value="hydroxyacylglutathione_hydrolase_MBL-fold"/>
    <property type="match status" value="1"/>
</dbReference>
<dbReference type="Gene3D" id="3.60.15.10">
    <property type="entry name" value="Ribonuclease Z/Hydroxyacylglutathione hydrolase-like"/>
    <property type="match status" value="1"/>
</dbReference>
<dbReference type="HAMAP" id="MF_01374">
    <property type="entry name" value="Glyoxalase_2"/>
    <property type="match status" value="1"/>
</dbReference>
<dbReference type="InterPro" id="IPR035680">
    <property type="entry name" value="Clx_II_MBL"/>
</dbReference>
<dbReference type="InterPro" id="IPR050110">
    <property type="entry name" value="Glyoxalase_II_hydrolase"/>
</dbReference>
<dbReference type="InterPro" id="IPR032282">
    <property type="entry name" value="HAGH_C"/>
</dbReference>
<dbReference type="InterPro" id="IPR017782">
    <property type="entry name" value="Hydroxyacylglutathione_Hdrlase"/>
</dbReference>
<dbReference type="InterPro" id="IPR001279">
    <property type="entry name" value="Metallo-B-lactamas"/>
</dbReference>
<dbReference type="InterPro" id="IPR036866">
    <property type="entry name" value="RibonucZ/Hydroxyglut_hydro"/>
</dbReference>
<dbReference type="PANTHER" id="PTHR43705">
    <property type="entry name" value="HYDROXYACYLGLUTATHIONE HYDROLASE"/>
    <property type="match status" value="1"/>
</dbReference>
<dbReference type="PANTHER" id="PTHR43705:SF1">
    <property type="entry name" value="HYDROXYACYLGLUTATHIONE HYDROLASE GLOB"/>
    <property type="match status" value="1"/>
</dbReference>
<dbReference type="Pfam" id="PF16123">
    <property type="entry name" value="HAGH_C"/>
    <property type="match status" value="1"/>
</dbReference>
<dbReference type="Pfam" id="PF00753">
    <property type="entry name" value="Lactamase_B"/>
    <property type="match status" value="1"/>
</dbReference>
<dbReference type="SMART" id="SM00849">
    <property type="entry name" value="Lactamase_B"/>
    <property type="match status" value="1"/>
</dbReference>
<dbReference type="SUPFAM" id="SSF56281">
    <property type="entry name" value="Metallo-hydrolase/oxidoreductase"/>
    <property type="match status" value="1"/>
</dbReference>
<sequence>MQIKRWFLNNSLRNYQYLLYDKSHAIVIDPLKSDIFAEFIAKNKLQLEAILITHKHGDHIAGVKKLLAIYPNAKVYAYTGNDLFKPDIYVKDGSFINLGFTSFRVMYIPGHIDDHVCFLFEQERALFCGDTLFNAGVGGVQAESADINQLYDSLVKITKLDGDIKPYPAHDYWLGNLDFALSILADDSYFNYYRNQVAELAAEDKPIVNLAEEAKLNIFIRAMSDKALLKALPDYSLGREMFVKLRQLKNNF</sequence>
<gene>
    <name evidence="1" type="primary">gloB</name>
    <name type="ordered locus">FTH_0660</name>
</gene>